<gene>
    <name type="primary">xlnC</name>
    <name type="ORF">AN1818</name>
</gene>
<dbReference type="EC" id="3.2.1.8"/>
<dbReference type="EMBL" id="Z49894">
    <property type="protein sequence ID" value="CAA90075.1"/>
    <property type="molecule type" value="Genomic_DNA"/>
</dbReference>
<dbReference type="EMBL" id="DQ490475">
    <property type="protein sequence ID" value="ABF50851.1"/>
    <property type="molecule type" value="mRNA"/>
</dbReference>
<dbReference type="EMBL" id="AACD01000029">
    <property type="protein sequence ID" value="EAA64983.1"/>
    <property type="status" value="ALT_SEQ"/>
    <property type="molecule type" value="Genomic_DNA"/>
</dbReference>
<dbReference type="EMBL" id="BN001307">
    <property type="protein sequence ID" value="CBF85620.1"/>
    <property type="status" value="ALT_SEQ"/>
    <property type="molecule type" value="Genomic_DNA"/>
</dbReference>
<dbReference type="PIR" id="JC5034">
    <property type="entry name" value="JC5034"/>
</dbReference>
<dbReference type="RefSeq" id="XP_659422.1">
    <property type="nucleotide sequence ID" value="XM_654330.1"/>
</dbReference>
<dbReference type="PDB" id="1TA3">
    <property type="method" value="X-ray"/>
    <property type="resolution" value="1.70 A"/>
    <property type="chains" value="B=25-327"/>
</dbReference>
<dbReference type="PDBsum" id="1TA3"/>
<dbReference type="SMR" id="Q00177"/>
<dbReference type="STRING" id="227321.Q00177"/>
<dbReference type="CAZy" id="GH10">
    <property type="family name" value="Glycoside Hydrolase Family 10"/>
</dbReference>
<dbReference type="KEGG" id="ani:ANIA_01818"/>
<dbReference type="eggNOG" id="ENOG502QSCW">
    <property type="taxonomic scope" value="Eukaryota"/>
</dbReference>
<dbReference type="HOGENOM" id="CLU_020161_2_0_1"/>
<dbReference type="InParanoid" id="Q00177"/>
<dbReference type="OrthoDB" id="3055998at2759"/>
<dbReference type="BRENDA" id="3.2.1.8">
    <property type="organism ID" value="517"/>
</dbReference>
<dbReference type="UniPathway" id="UPA00114"/>
<dbReference type="EvolutionaryTrace" id="Q00177"/>
<dbReference type="Proteomes" id="UP000000560">
    <property type="component" value="Chromosome VII"/>
</dbReference>
<dbReference type="GO" id="GO:0005576">
    <property type="term" value="C:extracellular region"/>
    <property type="evidence" value="ECO:0007669"/>
    <property type="project" value="UniProtKB-SubCell"/>
</dbReference>
<dbReference type="GO" id="GO:0031176">
    <property type="term" value="F:endo-1,4-beta-xylanase activity"/>
    <property type="evidence" value="ECO:0000314"/>
    <property type="project" value="UniProtKB"/>
</dbReference>
<dbReference type="GO" id="GO:0045493">
    <property type="term" value="P:xylan catabolic process"/>
    <property type="evidence" value="ECO:0000314"/>
    <property type="project" value="UniProtKB"/>
</dbReference>
<dbReference type="FunFam" id="3.20.20.80:FF:000094">
    <property type="entry name" value="Endo-1,4-beta-xylanase"/>
    <property type="match status" value="1"/>
</dbReference>
<dbReference type="Gene3D" id="3.20.20.80">
    <property type="entry name" value="Glycosidases"/>
    <property type="match status" value="1"/>
</dbReference>
<dbReference type="InterPro" id="IPR044846">
    <property type="entry name" value="GH10"/>
</dbReference>
<dbReference type="InterPro" id="IPR001000">
    <property type="entry name" value="GH10_dom"/>
</dbReference>
<dbReference type="InterPro" id="IPR017853">
    <property type="entry name" value="Glycoside_hydrolase_SF"/>
</dbReference>
<dbReference type="PANTHER" id="PTHR31490:SF76">
    <property type="entry name" value="ENDO-1,4-BETA-XYLANASE C"/>
    <property type="match status" value="1"/>
</dbReference>
<dbReference type="PANTHER" id="PTHR31490">
    <property type="entry name" value="GLYCOSYL HYDROLASE"/>
    <property type="match status" value="1"/>
</dbReference>
<dbReference type="Pfam" id="PF00331">
    <property type="entry name" value="Glyco_hydro_10"/>
    <property type="match status" value="1"/>
</dbReference>
<dbReference type="PRINTS" id="PR00134">
    <property type="entry name" value="GLHYDRLASE10"/>
</dbReference>
<dbReference type="SMART" id="SM00633">
    <property type="entry name" value="Glyco_10"/>
    <property type="match status" value="1"/>
</dbReference>
<dbReference type="SUPFAM" id="SSF51445">
    <property type="entry name" value="(Trans)glycosidases"/>
    <property type="match status" value="1"/>
</dbReference>
<dbReference type="PROSITE" id="PS51760">
    <property type="entry name" value="GH10_2"/>
    <property type="match status" value="1"/>
</dbReference>
<protein>
    <recommendedName>
        <fullName>Endo-1,4-beta-xylanase C</fullName>
        <shortName>Xylanase C</shortName>
        <ecNumber>3.2.1.8</ecNumber>
    </recommendedName>
    <alternativeName>
        <fullName>1,4-beta-D-xylan xylanohydrolase C</fullName>
    </alternativeName>
    <alternativeName>
        <fullName>34 kDa xylanase</fullName>
    </alternativeName>
    <alternativeName>
        <fullName>Xylanase X34</fullName>
    </alternativeName>
</protein>
<keyword id="KW-0002">3D-structure</keyword>
<keyword id="KW-0119">Carbohydrate metabolism</keyword>
<keyword id="KW-1015">Disulfide bond</keyword>
<keyword id="KW-0326">Glycosidase</keyword>
<keyword id="KW-0378">Hydrolase</keyword>
<keyword id="KW-0624">Polysaccharide degradation</keyword>
<keyword id="KW-0873">Pyrrolidone carboxylic acid</keyword>
<keyword id="KW-1185">Reference proteome</keyword>
<keyword id="KW-0964">Secreted</keyword>
<keyword id="KW-0732">Signal</keyword>
<keyword id="KW-0858">Xylan degradation</keyword>
<sequence length="327" mass="35441">MVHLKTLAGSAVFASLATAAVLPRQSASLNDLFVAAGKSYFGTCSDQALLQNSQNEAIVASQFGVITPENSMKWDALEPSQGNFGWSGADYLVDYATQHNKKVRGHTLVWHSQLPSWVSSIGDANTLRSVMTNHINEVVGRYKGKIMHWDVVNEIFNEDGTFRNSVFYNLLGEDFVRIAFETARAADPDAKLYINDYNLDSASYAKTQAMASYVKKWLAEGVPIDGIGSQAHYSSSHWSSTEAAGALSSLANTGVSEVAITELDIAGAASSDYLNLLNACLNEQKCVGITVWGVSDKDSWRASDSPLLFDGNYQPKDAYNAIVNALS</sequence>
<proteinExistence type="evidence at protein level"/>
<comment type="function">
    <text evidence="4 6">Endo-1,4-beta-xylanase involved in the hydrolysis of xylan, a major structural heterogeneous polysaccharide found in plant biomass representing the second most abundant polysaccharide in the biosphere, after cellulose.</text>
</comment>
<comment type="catalytic activity">
    <reaction>
        <text>Endohydrolysis of (1-&gt;4)-beta-D-xylosidic linkages in xylans.</text>
        <dbReference type="EC" id="3.2.1.8"/>
    </reaction>
</comment>
<comment type="biophysicochemical properties">
    <phDependence>
        <text evidence="4">Optimum pH is 4.9.</text>
    </phDependence>
    <temperatureDependence>
        <text evidence="4">Optimum temperature is 52 degrees Celsius.</text>
    </temperatureDependence>
</comment>
<comment type="pathway">
    <text>Glycan degradation; xylan degradation.</text>
</comment>
<comment type="subcellular location">
    <subcellularLocation>
        <location evidence="5">Secreted</location>
    </subcellularLocation>
</comment>
<comment type="induction">
    <text evidence="6">Expressed in presence of xylan and repressed by glucose.</text>
</comment>
<comment type="similarity">
    <text evidence="7">Belongs to the glycosyl hydrolase 10 (cellulase F) family.</text>
</comment>
<comment type="sequence caution" evidence="7">
    <conflict type="erroneous gene model prediction">
        <sequence resource="EMBL-CDS" id="CBF85620"/>
    </conflict>
</comment>
<comment type="sequence caution" evidence="7">
    <conflict type="erroneous gene model prediction">
        <sequence resource="EMBL-CDS" id="EAA64983"/>
    </conflict>
</comment>
<accession>Q00177</accession>
<accession>C8VPM8</accession>
<accession>Q1HFU9</accession>
<accession>Q5BCB2</accession>
<organism>
    <name type="scientific">Emericella nidulans (strain FGSC A4 / ATCC 38163 / CBS 112.46 / NRRL 194 / M139)</name>
    <name type="common">Aspergillus nidulans</name>
    <dbReference type="NCBI Taxonomy" id="227321"/>
    <lineage>
        <taxon>Eukaryota</taxon>
        <taxon>Fungi</taxon>
        <taxon>Dikarya</taxon>
        <taxon>Ascomycota</taxon>
        <taxon>Pezizomycotina</taxon>
        <taxon>Eurotiomycetes</taxon>
        <taxon>Eurotiomycetidae</taxon>
        <taxon>Eurotiales</taxon>
        <taxon>Aspergillaceae</taxon>
        <taxon>Aspergillus</taxon>
        <taxon>Aspergillus subgen. Nidulantes</taxon>
    </lineage>
</organism>
<reference key="1">
    <citation type="journal article" date="1996" name="Gene">
        <title>Identification, isolation and sequence of the Aspergillus nidulans xlnC gene encoding the 34-kDa xylanase.</title>
        <authorList>
            <person name="Maccabe A.P."/>
            <person name="Fernandez-Espinar M.-T."/>
            <person name="de Graaff L.H."/>
            <person name="Visser J."/>
            <person name="Ramon D."/>
        </authorList>
    </citation>
    <scope>NUCLEOTIDE SEQUENCE [GENOMIC DNA]</scope>
    <scope>FUNCTION</scope>
    <scope>INDUCTION</scope>
</reference>
<reference key="2">
    <citation type="journal article" date="2006" name="Proc. Natl. Acad. Sci. U.S.A.">
        <title>Development and application of a suite of polysaccharide-degrading enzymes for analyzing plant cell walls.</title>
        <authorList>
            <person name="Bauer S."/>
            <person name="Vasu P."/>
            <person name="Persson S."/>
            <person name="Mort A.J."/>
            <person name="Somerville C.R."/>
        </authorList>
    </citation>
    <scope>NUCLEOTIDE SEQUENCE [MRNA]</scope>
    <scope>FUNCTION</scope>
    <scope>BIOPHYSICOCHEMICAL PROPERTIES</scope>
    <source>
        <strain>FGSC A4 / ATCC 38163 / CBS 112.46 / NRRL 194 / M139</strain>
    </source>
</reference>
<reference key="3">
    <citation type="journal article" date="2005" name="Nature">
        <title>Sequencing of Aspergillus nidulans and comparative analysis with A. fumigatus and A. oryzae.</title>
        <authorList>
            <person name="Galagan J.E."/>
            <person name="Calvo S.E."/>
            <person name="Cuomo C."/>
            <person name="Ma L.-J."/>
            <person name="Wortman J.R."/>
            <person name="Batzoglou S."/>
            <person name="Lee S.-I."/>
            <person name="Bastuerkmen M."/>
            <person name="Spevak C.C."/>
            <person name="Clutterbuck J."/>
            <person name="Kapitonov V."/>
            <person name="Jurka J."/>
            <person name="Scazzocchio C."/>
            <person name="Farman M.L."/>
            <person name="Butler J."/>
            <person name="Purcell S."/>
            <person name="Harris S."/>
            <person name="Braus G.H."/>
            <person name="Draht O."/>
            <person name="Busch S."/>
            <person name="D'Enfert C."/>
            <person name="Bouchier C."/>
            <person name="Goldman G.H."/>
            <person name="Bell-Pedersen D."/>
            <person name="Griffiths-Jones S."/>
            <person name="Doonan J.H."/>
            <person name="Yu J."/>
            <person name="Vienken K."/>
            <person name="Pain A."/>
            <person name="Freitag M."/>
            <person name="Selker E.U."/>
            <person name="Archer D.B."/>
            <person name="Penalva M.A."/>
            <person name="Oakley B.R."/>
            <person name="Momany M."/>
            <person name="Tanaka T."/>
            <person name="Kumagai T."/>
            <person name="Asai K."/>
            <person name="Machida M."/>
            <person name="Nierman W.C."/>
            <person name="Denning D.W."/>
            <person name="Caddick M.X."/>
            <person name="Hynes M."/>
            <person name="Paoletti M."/>
            <person name="Fischer R."/>
            <person name="Miller B.L."/>
            <person name="Dyer P.S."/>
            <person name="Sachs M.S."/>
            <person name="Osmani S.A."/>
            <person name="Birren B.W."/>
        </authorList>
    </citation>
    <scope>NUCLEOTIDE SEQUENCE [LARGE SCALE GENOMIC DNA]</scope>
    <source>
        <strain>FGSC A4 / ATCC 38163 / CBS 112.46 / NRRL 194 / M139</strain>
    </source>
</reference>
<reference key="4">
    <citation type="journal article" date="2009" name="Fungal Genet. Biol.">
        <title>The 2008 update of the Aspergillus nidulans genome annotation: a community effort.</title>
        <authorList>
            <person name="Wortman J.R."/>
            <person name="Gilsenan J.M."/>
            <person name="Joardar V."/>
            <person name="Deegan J."/>
            <person name="Clutterbuck J."/>
            <person name="Andersen M.R."/>
            <person name="Archer D."/>
            <person name="Bencina M."/>
            <person name="Braus G."/>
            <person name="Coutinho P."/>
            <person name="von Dohren H."/>
            <person name="Doonan J."/>
            <person name="Driessen A.J."/>
            <person name="Durek P."/>
            <person name="Espeso E."/>
            <person name="Fekete E."/>
            <person name="Flipphi M."/>
            <person name="Estrada C.G."/>
            <person name="Geysens S."/>
            <person name="Goldman G."/>
            <person name="de Groot P.W."/>
            <person name="Hansen K."/>
            <person name="Harris S.D."/>
            <person name="Heinekamp T."/>
            <person name="Helmstaedt K."/>
            <person name="Henrissat B."/>
            <person name="Hofmann G."/>
            <person name="Homan T."/>
            <person name="Horio T."/>
            <person name="Horiuchi H."/>
            <person name="James S."/>
            <person name="Jones M."/>
            <person name="Karaffa L."/>
            <person name="Karanyi Z."/>
            <person name="Kato M."/>
            <person name="Keller N."/>
            <person name="Kelly D.E."/>
            <person name="Kiel J.A."/>
            <person name="Kim J.M."/>
            <person name="van der Klei I.J."/>
            <person name="Klis F.M."/>
            <person name="Kovalchuk A."/>
            <person name="Krasevec N."/>
            <person name="Kubicek C.P."/>
            <person name="Liu B."/>
            <person name="Maccabe A."/>
            <person name="Meyer V."/>
            <person name="Mirabito P."/>
            <person name="Miskei M."/>
            <person name="Mos M."/>
            <person name="Mullins J."/>
            <person name="Nelson D.R."/>
            <person name="Nielsen J."/>
            <person name="Oakley B.R."/>
            <person name="Osmani S.A."/>
            <person name="Pakula T."/>
            <person name="Paszewski A."/>
            <person name="Paulsen I."/>
            <person name="Pilsyk S."/>
            <person name="Pocsi I."/>
            <person name="Punt P.J."/>
            <person name="Ram A.F."/>
            <person name="Ren Q."/>
            <person name="Robellet X."/>
            <person name="Robson G."/>
            <person name="Seiboth B."/>
            <person name="van Solingen P."/>
            <person name="Specht T."/>
            <person name="Sun J."/>
            <person name="Taheri-Talesh N."/>
            <person name="Takeshita N."/>
            <person name="Ussery D."/>
            <person name="vanKuyk P.A."/>
            <person name="Visser H."/>
            <person name="van de Vondervoort P.J."/>
            <person name="de Vries R.P."/>
            <person name="Walton J."/>
            <person name="Xiang X."/>
            <person name="Xiong Y."/>
            <person name="Zeng A.P."/>
            <person name="Brandt B.W."/>
            <person name="Cornell M.J."/>
            <person name="van den Hondel C.A."/>
            <person name="Visser J."/>
            <person name="Oliver S.G."/>
            <person name="Turner G."/>
        </authorList>
    </citation>
    <scope>GENOME REANNOTATION</scope>
    <source>
        <strain>FGSC A4 / ATCC 38163 / CBS 112.46 / NRRL 194 / M139</strain>
    </source>
</reference>
<reference key="5">
    <citation type="journal article" date="2014" name="BMC Genomics">
        <title>Elucidating how the saprophytic fungus Aspergillus nidulans uses the plant polyester suberin as carbon source.</title>
        <authorList>
            <person name="Martins I."/>
            <person name="Hartmann D.O."/>
            <person name="Alves P.C."/>
            <person name="Martins C."/>
            <person name="Garcia H."/>
            <person name="Leclercq C.C."/>
            <person name="Ferreira R."/>
            <person name="He J."/>
            <person name="Renaut J."/>
            <person name="Becker J.D."/>
            <person name="Silva Pereira C."/>
        </authorList>
    </citation>
    <scope>SUBCELLULAR LOCATION</scope>
</reference>
<reference key="6">
    <citation type="journal article" date="2004" name="J. Biol. Chem.">
        <title>The dual nature of the wheat xylanase protein inhibitor XIP-I: structural basis for the inhibition of family 10 and family 11 xylanases.</title>
        <authorList>
            <person name="Payan F."/>
            <person name="Leone P."/>
            <person name="Porciero S."/>
            <person name="Furniss C."/>
            <person name="Tahir T."/>
            <person name="Williamson G."/>
            <person name="Durand A."/>
            <person name="Manzanares P."/>
            <person name="Gilbert H.J."/>
            <person name="Juge N."/>
            <person name="Roussel A."/>
        </authorList>
    </citation>
    <scope>X-RAY CRYSTALLOGRAPHY (1.7 ANGSTROMS) OF 25-327 IN COMPLEX WITH WHEAT XIP-1</scope>
    <scope>DISULFIDE BOND</scope>
</reference>
<evidence type="ECO:0000250" key="1"/>
<evidence type="ECO:0000255" key="2">
    <source>
        <dbReference type="PROSITE-ProRule" id="PRU01096"/>
    </source>
</evidence>
<evidence type="ECO:0000269" key="3">
    <source>
    </source>
</evidence>
<evidence type="ECO:0000269" key="4">
    <source>
    </source>
</evidence>
<evidence type="ECO:0000269" key="5">
    <source>
    </source>
</evidence>
<evidence type="ECO:0000269" key="6">
    <source>
    </source>
</evidence>
<evidence type="ECO:0000305" key="7"/>
<evidence type="ECO:0007829" key="8">
    <source>
        <dbReference type="PDB" id="1TA3"/>
    </source>
</evidence>
<name>XYNC_EMENI</name>
<feature type="signal peptide" evidence="1">
    <location>
        <begin position="1"/>
        <end position="24"/>
    </location>
</feature>
<feature type="chain" id="PRO_0000007974" description="Endo-1,4-beta-xylanase C">
    <location>
        <begin position="25"/>
        <end position="327"/>
    </location>
</feature>
<feature type="domain" description="GH10" evidence="2">
    <location>
        <begin position="44"/>
        <end position="325"/>
    </location>
</feature>
<feature type="active site" description="Proton donor" evidence="1">
    <location>
        <position position="154"/>
    </location>
</feature>
<feature type="active site" description="Nucleophile" evidence="1">
    <location>
        <position position="262"/>
    </location>
</feature>
<feature type="modified residue" description="Pyrrolidone carboxylic acid" evidence="1">
    <location>
        <position position="25"/>
    </location>
</feature>
<feature type="disulfide bond" evidence="3">
    <location>
        <begin position="280"/>
        <end position="286"/>
    </location>
</feature>
<feature type="helix" evidence="8">
    <location>
        <begin position="29"/>
        <end position="35"/>
    </location>
</feature>
<feature type="strand" evidence="8">
    <location>
        <begin position="39"/>
        <end position="45"/>
    </location>
</feature>
<feature type="helix" evidence="8">
    <location>
        <begin position="47"/>
        <end position="51"/>
    </location>
</feature>
<feature type="helix" evidence="8">
    <location>
        <begin position="53"/>
        <end position="62"/>
    </location>
</feature>
<feature type="strand" evidence="8">
    <location>
        <begin position="64"/>
        <end position="70"/>
    </location>
</feature>
<feature type="helix" evidence="8">
    <location>
        <begin position="74"/>
        <end position="77"/>
    </location>
</feature>
<feature type="helix" evidence="8">
    <location>
        <begin position="87"/>
        <end position="98"/>
    </location>
</feature>
<feature type="strand" evidence="8">
    <location>
        <begin position="102"/>
        <end position="109"/>
    </location>
</feature>
<feature type="strand" evidence="8">
    <location>
        <begin position="111"/>
        <end position="113"/>
    </location>
</feature>
<feature type="helix" evidence="8">
    <location>
        <begin position="116"/>
        <end position="119"/>
    </location>
</feature>
<feature type="helix" evidence="8">
    <location>
        <begin position="124"/>
        <end position="141"/>
    </location>
</feature>
<feature type="turn" evidence="8">
    <location>
        <begin position="142"/>
        <end position="144"/>
    </location>
</feature>
<feature type="strand" evidence="8">
    <location>
        <begin position="147"/>
        <end position="154"/>
    </location>
</feature>
<feature type="strand" evidence="8">
    <location>
        <begin position="160"/>
        <end position="162"/>
    </location>
</feature>
<feature type="helix" evidence="8">
    <location>
        <begin position="166"/>
        <end position="171"/>
    </location>
</feature>
<feature type="helix" evidence="8">
    <location>
        <begin position="174"/>
        <end position="186"/>
    </location>
</feature>
<feature type="strand" evidence="8">
    <location>
        <begin position="190"/>
        <end position="197"/>
    </location>
</feature>
<feature type="helix" evidence="8">
    <location>
        <begin position="205"/>
        <end position="219"/>
    </location>
</feature>
<feature type="strand" evidence="8">
    <location>
        <begin position="226"/>
        <end position="229"/>
    </location>
</feature>
<feature type="helix" evidence="8">
    <location>
        <begin position="240"/>
        <end position="242"/>
    </location>
</feature>
<feature type="helix" evidence="8">
    <location>
        <begin position="243"/>
        <end position="251"/>
    </location>
</feature>
<feature type="strand" evidence="8">
    <location>
        <begin position="256"/>
        <end position="265"/>
    </location>
</feature>
<feature type="helix" evidence="8">
    <location>
        <begin position="270"/>
        <end position="281"/>
    </location>
</feature>
<feature type="strand" evidence="8">
    <location>
        <begin position="286"/>
        <end position="292"/>
    </location>
</feature>
<feature type="helix" evidence="8">
    <location>
        <begin position="296"/>
        <end position="298"/>
    </location>
</feature>
<feature type="helix" evidence="8">
    <location>
        <begin position="302"/>
        <end position="304"/>
    </location>
</feature>
<feature type="strand" evidence="8">
    <location>
        <begin position="307"/>
        <end position="309"/>
    </location>
</feature>
<feature type="helix" evidence="8">
    <location>
        <begin position="317"/>
        <end position="326"/>
    </location>
</feature>